<reference key="1">
    <citation type="journal article" date="2006" name="Proc. Natl. Acad. Sci. U.S.A.">
        <title>Comparative genomics of the lactic acid bacteria.</title>
        <authorList>
            <person name="Makarova K.S."/>
            <person name="Slesarev A."/>
            <person name="Wolf Y.I."/>
            <person name="Sorokin A."/>
            <person name="Mirkin B."/>
            <person name="Koonin E.V."/>
            <person name="Pavlov A."/>
            <person name="Pavlova N."/>
            <person name="Karamychev V."/>
            <person name="Polouchine N."/>
            <person name="Shakhova V."/>
            <person name="Grigoriev I."/>
            <person name="Lou Y."/>
            <person name="Rohksar D."/>
            <person name="Lucas S."/>
            <person name="Huang K."/>
            <person name="Goodstein D.M."/>
            <person name="Hawkins T."/>
            <person name="Plengvidhya V."/>
            <person name="Welker D."/>
            <person name="Hughes J."/>
            <person name="Goh Y."/>
            <person name="Benson A."/>
            <person name="Baldwin K."/>
            <person name="Lee J.-H."/>
            <person name="Diaz-Muniz I."/>
            <person name="Dosti B."/>
            <person name="Smeianov V."/>
            <person name="Wechter W."/>
            <person name="Barabote R."/>
            <person name="Lorca G."/>
            <person name="Altermann E."/>
            <person name="Barrangou R."/>
            <person name="Ganesan B."/>
            <person name="Xie Y."/>
            <person name="Rawsthorne H."/>
            <person name="Tamir D."/>
            <person name="Parker C."/>
            <person name="Breidt F."/>
            <person name="Broadbent J.R."/>
            <person name="Hutkins R."/>
            <person name="O'Sullivan D."/>
            <person name="Steele J."/>
            <person name="Unlu G."/>
            <person name="Saier M.H. Jr."/>
            <person name="Klaenhammer T."/>
            <person name="Richardson P."/>
            <person name="Kozyavkin S."/>
            <person name="Weimer B.C."/>
            <person name="Mills D.A."/>
        </authorList>
    </citation>
    <scope>NUCLEOTIDE SEQUENCE [LARGE SCALE GENOMIC DNA]</scope>
    <source>
        <strain>ATCC 334 / BCRC 17002 / CCUG 31169 / CIP 107868 / KCTC 3260 / NRRL B-441</strain>
    </source>
</reference>
<comment type="similarity">
    <text evidence="1">Belongs to the bacterial ribosomal protein bL34 family.</text>
</comment>
<accession>Q033K5</accession>
<gene>
    <name evidence="1" type="primary">rpmH</name>
    <name type="ordered locus">LSEI_2909</name>
</gene>
<feature type="chain" id="PRO_1000013358" description="Large ribosomal subunit protein bL34">
    <location>
        <begin position="1"/>
        <end position="46"/>
    </location>
</feature>
<feature type="region of interest" description="Disordered" evidence="2">
    <location>
        <begin position="26"/>
        <end position="46"/>
    </location>
</feature>
<evidence type="ECO:0000255" key="1">
    <source>
        <dbReference type="HAMAP-Rule" id="MF_00391"/>
    </source>
</evidence>
<evidence type="ECO:0000256" key="2">
    <source>
        <dbReference type="SAM" id="MobiDB-lite"/>
    </source>
</evidence>
<evidence type="ECO:0000305" key="3"/>
<name>RL34_LACP3</name>
<proteinExistence type="inferred from homology"/>
<sequence length="46" mass="5523">MTTKRTFQPKKRHRERVHGFMKRMSTKNGRKVLARRRAKGRKVLSA</sequence>
<organism>
    <name type="scientific">Lacticaseibacillus paracasei (strain ATCC 334 / BCRC 17002 / CCUG 31169 / CIP 107868 / KCTC 3260 / NRRL B-441)</name>
    <name type="common">Lactobacillus paracasei</name>
    <dbReference type="NCBI Taxonomy" id="321967"/>
    <lineage>
        <taxon>Bacteria</taxon>
        <taxon>Bacillati</taxon>
        <taxon>Bacillota</taxon>
        <taxon>Bacilli</taxon>
        <taxon>Lactobacillales</taxon>
        <taxon>Lactobacillaceae</taxon>
        <taxon>Lacticaseibacillus</taxon>
    </lineage>
</organism>
<keyword id="KW-1185">Reference proteome</keyword>
<keyword id="KW-0687">Ribonucleoprotein</keyword>
<keyword id="KW-0689">Ribosomal protein</keyword>
<dbReference type="EMBL" id="CP000423">
    <property type="protein sequence ID" value="ABJ71617.1"/>
    <property type="molecule type" value="Genomic_DNA"/>
</dbReference>
<dbReference type="RefSeq" id="WP_003568442.1">
    <property type="nucleotide sequence ID" value="NC_008526.1"/>
</dbReference>
<dbReference type="RefSeq" id="YP_808059.1">
    <property type="nucleotide sequence ID" value="NC_008526.1"/>
</dbReference>
<dbReference type="SMR" id="Q033K5"/>
<dbReference type="STRING" id="321967.LSEI_2909"/>
<dbReference type="PaxDb" id="321967-LSEI_2909"/>
<dbReference type="GeneID" id="93270557"/>
<dbReference type="KEGG" id="lca:LSEI_2909"/>
<dbReference type="PATRIC" id="fig|321967.11.peg.2853"/>
<dbReference type="HOGENOM" id="CLU_129938_2_0_9"/>
<dbReference type="PRO" id="PR:Q033K5"/>
<dbReference type="Proteomes" id="UP000001651">
    <property type="component" value="Chromosome"/>
</dbReference>
<dbReference type="GO" id="GO:1990904">
    <property type="term" value="C:ribonucleoprotein complex"/>
    <property type="evidence" value="ECO:0007669"/>
    <property type="project" value="UniProtKB-KW"/>
</dbReference>
<dbReference type="GO" id="GO:0005840">
    <property type="term" value="C:ribosome"/>
    <property type="evidence" value="ECO:0007669"/>
    <property type="project" value="UniProtKB-KW"/>
</dbReference>
<dbReference type="GO" id="GO:0003735">
    <property type="term" value="F:structural constituent of ribosome"/>
    <property type="evidence" value="ECO:0007669"/>
    <property type="project" value="InterPro"/>
</dbReference>
<dbReference type="GO" id="GO:0006412">
    <property type="term" value="P:translation"/>
    <property type="evidence" value="ECO:0007669"/>
    <property type="project" value="UniProtKB-UniRule"/>
</dbReference>
<dbReference type="FunFam" id="1.10.287.3980:FF:000001">
    <property type="entry name" value="Mitochondrial ribosomal protein L34"/>
    <property type="match status" value="1"/>
</dbReference>
<dbReference type="Gene3D" id="1.10.287.3980">
    <property type="match status" value="1"/>
</dbReference>
<dbReference type="HAMAP" id="MF_00391">
    <property type="entry name" value="Ribosomal_bL34"/>
    <property type="match status" value="1"/>
</dbReference>
<dbReference type="InterPro" id="IPR000271">
    <property type="entry name" value="Ribosomal_bL34"/>
</dbReference>
<dbReference type="InterPro" id="IPR020939">
    <property type="entry name" value="Ribosomal_bL34_CS"/>
</dbReference>
<dbReference type="NCBIfam" id="TIGR01030">
    <property type="entry name" value="rpmH_bact"/>
    <property type="match status" value="1"/>
</dbReference>
<dbReference type="PANTHER" id="PTHR14503:SF4">
    <property type="entry name" value="LARGE RIBOSOMAL SUBUNIT PROTEIN BL34M"/>
    <property type="match status" value="1"/>
</dbReference>
<dbReference type="PANTHER" id="PTHR14503">
    <property type="entry name" value="MITOCHONDRIAL RIBOSOMAL PROTEIN 34 FAMILY MEMBER"/>
    <property type="match status" value="1"/>
</dbReference>
<dbReference type="Pfam" id="PF00468">
    <property type="entry name" value="Ribosomal_L34"/>
    <property type="match status" value="1"/>
</dbReference>
<dbReference type="PROSITE" id="PS00784">
    <property type="entry name" value="RIBOSOMAL_L34"/>
    <property type="match status" value="1"/>
</dbReference>
<protein>
    <recommendedName>
        <fullName evidence="1">Large ribosomal subunit protein bL34</fullName>
    </recommendedName>
    <alternativeName>
        <fullName evidence="3">50S ribosomal protein L34</fullName>
    </alternativeName>
</protein>